<reference key="1">
    <citation type="journal article" date="2000" name="J. Mol. Evol.">
        <title>The structure and gene repertoire of an ancient red algal plastid genome.</title>
        <authorList>
            <person name="Gloeckner G."/>
            <person name="Rosenthal A."/>
            <person name="Valentin K.-U."/>
        </authorList>
    </citation>
    <scope>NUCLEOTIDE SEQUENCE [LARGE SCALE GENOMIC DNA]</scope>
    <source>
        <strain>RK-1</strain>
    </source>
</reference>
<gene>
    <name type="primary">ycf16</name>
    <name type="synonym">ycf33</name>
</gene>
<comment type="subcellular location">
    <subcellularLocation>
        <location>Plastid</location>
        <location>Chloroplast</location>
    </subcellularLocation>
</comment>
<comment type="similarity">
    <text evidence="2">Belongs to the ABC transporter superfamily. Ycf16 family.</text>
</comment>
<protein>
    <recommendedName>
        <fullName>Probable ATP-dependent transporter ycf16</fullName>
    </recommendedName>
</protein>
<evidence type="ECO:0000255" key="1">
    <source>
        <dbReference type="PROSITE-ProRule" id="PRU00434"/>
    </source>
</evidence>
<evidence type="ECO:0000305" key="2"/>
<organism>
    <name type="scientific">Cyanidium caldarium</name>
    <name type="common">Red alga</name>
    <dbReference type="NCBI Taxonomy" id="2771"/>
    <lineage>
        <taxon>Eukaryota</taxon>
        <taxon>Rhodophyta</taxon>
        <taxon>Bangiophyceae</taxon>
        <taxon>Cyanidiales</taxon>
        <taxon>Cyanidiaceae</taxon>
        <taxon>Cyanidium</taxon>
    </lineage>
</organism>
<proteinExistence type="inferred from homology"/>
<accession>Q9TLX1</accession>
<dbReference type="EMBL" id="AF022186">
    <property type="protein sequence ID" value="AAF12947.1"/>
    <property type="molecule type" value="Genomic_DNA"/>
</dbReference>
<dbReference type="RefSeq" id="NP_045147.1">
    <property type="nucleotide sequence ID" value="NC_001840.1"/>
</dbReference>
<dbReference type="SMR" id="Q9TLX1"/>
<dbReference type="GeneID" id="800173"/>
<dbReference type="GO" id="GO:0009507">
    <property type="term" value="C:chloroplast"/>
    <property type="evidence" value="ECO:0007669"/>
    <property type="project" value="UniProtKB-SubCell"/>
</dbReference>
<dbReference type="GO" id="GO:0005524">
    <property type="term" value="F:ATP binding"/>
    <property type="evidence" value="ECO:0007669"/>
    <property type="project" value="UniProtKB-KW"/>
</dbReference>
<dbReference type="GO" id="GO:0016887">
    <property type="term" value="F:ATP hydrolysis activity"/>
    <property type="evidence" value="ECO:0007669"/>
    <property type="project" value="InterPro"/>
</dbReference>
<dbReference type="CDD" id="cd03217">
    <property type="entry name" value="ABC_FeS_Assembly"/>
    <property type="match status" value="1"/>
</dbReference>
<dbReference type="Gene3D" id="3.40.50.300">
    <property type="entry name" value="P-loop containing nucleotide triphosphate hydrolases"/>
    <property type="match status" value="1"/>
</dbReference>
<dbReference type="InterPro" id="IPR003593">
    <property type="entry name" value="AAA+_ATPase"/>
</dbReference>
<dbReference type="InterPro" id="IPR003439">
    <property type="entry name" value="ABC_transporter-like_ATP-bd"/>
</dbReference>
<dbReference type="InterPro" id="IPR017871">
    <property type="entry name" value="ABC_transporter-like_CS"/>
</dbReference>
<dbReference type="InterPro" id="IPR010230">
    <property type="entry name" value="FeS-cluster_ATPase_SufC"/>
</dbReference>
<dbReference type="InterPro" id="IPR027417">
    <property type="entry name" value="P-loop_NTPase"/>
</dbReference>
<dbReference type="NCBIfam" id="TIGR01978">
    <property type="entry name" value="sufC"/>
    <property type="match status" value="1"/>
</dbReference>
<dbReference type="PANTHER" id="PTHR43204">
    <property type="entry name" value="ABC TRANSPORTER I FAMILY MEMBER 6, CHLOROPLASTIC"/>
    <property type="match status" value="1"/>
</dbReference>
<dbReference type="PANTHER" id="PTHR43204:SF1">
    <property type="entry name" value="ABC TRANSPORTER I FAMILY MEMBER 6, CHLOROPLASTIC"/>
    <property type="match status" value="1"/>
</dbReference>
<dbReference type="Pfam" id="PF00005">
    <property type="entry name" value="ABC_tran"/>
    <property type="match status" value="1"/>
</dbReference>
<dbReference type="SMART" id="SM00382">
    <property type="entry name" value="AAA"/>
    <property type="match status" value="1"/>
</dbReference>
<dbReference type="SUPFAM" id="SSF52540">
    <property type="entry name" value="P-loop containing nucleoside triphosphate hydrolases"/>
    <property type="match status" value="1"/>
</dbReference>
<dbReference type="PROSITE" id="PS00211">
    <property type="entry name" value="ABC_TRANSPORTER_1"/>
    <property type="match status" value="1"/>
</dbReference>
<dbReference type="PROSITE" id="PS50893">
    <property type="entry name" value="ABC_TRANSPORTER_2"/>
    <property type="match status" value="1"/>
</dbReference>
<sequence>MKETSVLTIQNLKACVNEFEVLHNINLQIKTNETHVIMGPNGSGKSSLLKVIAGHPSYKVIEGKIFVENIDITQATPEERSNLGVFLGFQYPIEITGVNNADFLRAVYNQKRKKQGLKDLDPLEFLEILSPILDLVSMDQTFLHRNLNEGFSGGEKKRNEILQMILSKPRLAILDEPDSGLDIDALRSISEVINKLRNQKQCMLIITHYQNLLDYVIPDKVHIMDHGKIVETGDVTLAIQLKRKGYKWIKQSTN</sequence>
<keyword id="KW-0067">ATP-binding</keyword>
<keyword id="KW-0150">Chloroplast</keyword>
<keyword id="KW-0547">Nucleotide-binding</keyword>
<keyword id="KW-0934">Plastid</keyword>
<keyword id="KW-0813">Transport</keyword>
<name>ABCX_CYACA</name>
<feature type="chain" id="PRO_0000093408" description="Probable ATP-dependent transporter ycf16">
    <location>
        <begin position="1"/>
        <end position="254"/>
    </location>
</feature>
<feature type="domain" description="ABC transporter" evidence="1">
    <location>
        <begin position="7"/>
        <end position="251"/>
    </location>
</feature>
<feature type="binding site" evidence="1">
    <location>
        <begin position="39"/>
        <end position="46"/>
    </location>
    <ligand>
        <name>ATP</name>
        <dbReference type="ChEBI" id="CHEBI:30616"/>
    </ligand>
</feature>
<geneLocation type="chloroplast"/>